<proteinExistence type="inferred from homology"/>
<evidence type="ECO:0000255" key="1">
    <source>
        <dbReference type="HAMAP-Rule" id="MF_01337"/>
    </source>
</evidence>
<evidence type="ECO:0000305" key="2"/>
<reference key="1">
    <citation type="journal article" date="2003" name="Proc. Natl. Acad. Sci. U.S.A.">
        <title>The genome of Nanoarchaeum equitans: insights into early archaeal evolution and derived parasitism.</title>
        <authorList>
            <person name="Waters E."/>
            <person name="Hohn M.J."/>
            <person name="Ahel I."/>
            <person name="Graham D.E."/>
            <person name="Adams M.D."/>
            <person name="Barnstead M."/>
            <person name="Beeson K.Y."/>
            <person name="Bibbs L."/>
            <person name="Bolanos R."/>
            <person name="Keller M."/>
            <person name="Kretz K."/>
            <person name="Lin X."/>
            <person name="Mathur E."/>
            <person name="Ni J."/>
            <person name="Podar M."/>
            <person name="Richardson T."/>
            <person name="Sutton G.G."/>
            <person name="Simon M."/>
            <person name="Soell D."/>
            <person name="Stetter K.O."/>
            <person name="Short J.M."/>
            <person name="Noorderwier M."/>
        </authorList>
    </citation>
    <scope>NUCLEOTIDE SEQUENCE [LARGE SCALE GENOMIC DNA]</scope>
    <source>
        <strain>Kin4-M</strain>
    </source>
</reference>
<keyword id="KW-1185">Reference proteome</keyword>
<keyword id="KW-0687">Ribonucleoprotein</keyword>
<keyword id="KW-0689">Ribosomal protein</keyword>
<keyword id="KW-0694">RNA-binding</keyword>
<keyword id="KW-0699">rRNA-binding</keyword>
<gene>
    <name evidence="1" type="primary">rpl18</name>
    <name type="ordered locus">NEQ075</name>
</gene>
<protein>
    <recommendedName>
        <fullName evidence="1">Large ribosomal subunit protein uL18</fullName>
    </recommendedName>
    <alternativeName>
        <fullName evidence="2">50S ribosomal protein L18</fullName>
    </alternativeName>
</protein>
<sequence length="195" mass="22581">MAHGPRYRVPFRRRREGKTVYRKRLKLLLSGKPRLVVRRFNSNILAQLVEYDPKGDRVIFTIHSNVLKKYGWKGHRGNLPSAYLVGLIAGYEALKRGYKEAVLDIGRYKSTKGNALYAVLKGALDAGLNIPHSETILPSEDRIRGEHIANYAKMLKENEELYKKQFSRYLKEGLDPEQLPNHFEEVKQKIISQYQ</sequence>
<feature type="chain" id="PRO_0000131410" description="Large ribosomal subunit protein uL18">
    <location>
        <begin position="1"/>
        <end position="195"/>
    </location>
</feature>
<dbReference type="EMBL" id="AE017199">
    <property type="protein sequence ID" value="AAR38930.1"/>
    <property type="molecule type" value="Genomic_DNA"/>
</dbReference>
<dbReference type="SMR" id="Q74MJ4"/>
<dbReference type="STRING" id="228908.NEQ075"/>
<dbReference type="EnsemblBacteria" id="AAR38930">
    <property type="protein sequence ID" value="AAR38930"/>
    <property type="gene ID" value="NEQ075"/>
</dbReference>
<dbReference type="KEGG" id="neq:NEQ075"/>
<dbReference type="PATRIC" id="fig|228908.8.peg.77"/>
<dbReference type="HOGENOM" id="CLU_056222_2_0_2"/>
<dbReference type="Proteomes" id="UP000000578">
    <property type="component" value="Chromosome"/>
</dbReference>
<dbReference type="GO" id="GO:0022625">
    <property type="term" value="C:cytosolic large ribosomal subunit"/>
    <property type="evidence" value="ECO:0007669"/>
    <property type="project" value="TreeGrafter"/>
</dbReference>
<dbReference type="GO" id="GO:0008097">
    <property type="term" value="F:5S rRNA binding"/>
    <property type="evidence" value="ECO:0007669"/>
    <property type="project" value="InterPro"/>
</dbReference>
<dbReference type="GO" id="GO:0003735">
    <property type="term" value="F:structural constituent of ribosome"/>
    <property type="evidence" value="ECO:0007669"/>
    <property type="project" value="InterPro"/>
</dbReference>
<dbReference type="GO" id="GO:0000027">
    <property type="term" value="P:ribosomal large subunit assembly"/>
    <property type="evidence" value="ECO:0007669"/>
    <property type="project" value="TreeGrafter"/>
</dbReference>
<dbReference type="GO" id="GO:0006412">
    <property type="term" value="P:translation"/>
    <property type="evidence" value="ECO:0007669"/>
    <property type="project" value="UniProtKB-UniRule"/>
</dbReference>
<dbReference type="CDD" id="cd00432">
    <property type="entry name" value="Ribosomal_L18_L5e"/>
    <property type="match status" value="1"/>
</dbReference>
<dbReference type="Gene3D" id="3.30.420.100">
    <property type="match status" value="1"/>
</dbReference>
<dbReference type="HAMAP" id="MF_01337_A">
    <property type="entry name" value="Ribosomal_uL18_A"/>
    <property type="match status" value="1"/>
</dbReference>
<dbReference type="InterPro" id="IPR005485">
    <property type="entry name" value="Rbsml_uL18_euk"/>
</dbReference>
<dbReference type="NCBIfam" id="NF006342">
    <property type="entry name" value="PRK08569.1"/>
    <property type="match status" value="1"/>
</dbReference>
<dbReference type="PANTHER" id="PTHR23410:SF12">
    <property type="entry name" value="LARGE RIBOSOMAL SUBUNIT PROTEIN UL18"/>
    <property type="match status" value="1"/>
</dbReference>
<dbReference type="PANTHER" id="PTHR23410">
    <property type="entry name" value="RIBOSOMAL PROTEIN L5-RELATED"/>
    <property type="match status" value="1"/>
</dbReference>
<dbReference type="Pfam" id="PF17144">
    <property type="entry name" value="Ribosomal_L5e"/>
    <property type="match status" value="2"/>
</dbReference>
<dbReference type="PRINTS" id="PR00058">
    <property type="entry name" value="RIBOSOMALL5"/>
</dbReference>
<dbReference type="SUPFAM" id="SSF53137">
    <property type="entry name" value="Translational machinery components"/>
    <property type="match status" value="1"/>
</dbReference>
<comment type="function">
    <text evidence="1">This is one of the proteins that bind and probably mediate the attachment of the 5S RNA into the large ribosomal subunit, where it forms part of the central protuberance.</text>
</comment>
<comment type="subunit">
    <text evidence="1">Part of the 50S ribosomal subunit. Contacts the 5S and 23S rRNAs.</text>
</comment>
<comment type="similarity">
    <text evidence="1">Belongs to the universal ribosomal protein uL18 family.</text>
</comment>
<accession>Q74MJ4</accession>
<organism>
    <name type="scientific">Nanoarchaeum equitans (strain Kin4-M)</name>
    <dbReference type="NCBI Taxonomy" id="228908"/>
    <lineage>
        <taxon>Archaea</taxon>
        <taxon>Nanobdellota</taxon>
        <taxon>Candidatus Nanoarchaeia</taxon>
        <taxon>Nanoarchaeales</taxon>
        <taxon>Nanoarchaeaceae</taxon>
        <taxon>Nanoarchaeum</taxon>
    </lineage>
</organism>
<name>RL18_NANEQ</name>